<feature type="chain" id="PRO_0000178212" description="dITP/XTP pyrophosphatase">
    <location>
        <begin position="1"/>
        <end position="191"/>
    </location>
</feature>
<feature type="active site" description="Proton acceptor" evidence="1">
    <location>
        <position position="67"/>
    </location>
</feature>
<feature type="binding site" evidence="1">
    <location>
        <begin position="8"/>
        <end position="13"/>
    </location>
    <ligand>
        <name>substrate</name>
    </ligand>
</feature>
<feature type="binding site" evidence="1">
    <location>
        <position position="38"/>
    </location>
    <ligand>
        <name>Mg(2+)</name>
        <dbReference type="ChEBI" id="CHEBI:18420"/>
    </ligand>
</feature>
<feature type="binding site" evidence="1">
    <location>
        <position position="67"/>
    </location>
    <ligand>
        <name>Mg(2+)</name>
        <dbReference type="ChEBI" id="CHEBI:18420"/>
    </ligand>
</feature>
<feature type="binding site" evidence="1">
    <location>
        <position position="68"/>
    </location>
    <ligand>
        <name>substrate</name>
    </ligand>
</feature>
<feature type="binding site" evidence="1">
    <location>
        <begin position="146"/>
        <end position="149"/>
    </location>
    <ligand>
        <name>substrate</name>
    </ligand>
</feature>
<feature type="binding site" evidence="1">
    <location>
        <position position="169"/>
    </location>
    <ligand>
        <name>substrate</name>
    </ligand>
</feature>
<feature type="binding site" evidence="1">
    <location>
        <begin position="174"/>
        <end position="175"/>
    </location>
    <ligand>
        <name>substrate</name>
    </ligand>
</feature>
<evidence type="ECO:0000255" key="1">
    <source>
        <dbReference type="HAMAP-Rule" id="MF_01405"/>
    </source>
</evidence>
<protein>
    <recommendedName>
        <fullName evidence="1">dITP/XTP pyrophosphatase</fullName>
        <ecNumber evidence="1">3.6.1.66</ecNumber>
    </recommendedName>
    <alternativeName>
        <fullName evidence="1">Non-canonical purine NTP pyrophosphatase</fullName>
    </alternativeName>
    <alternativeName>
        <fullName evidence="1">Non-standard purine NTP pyrophosphatase</fullName>
    </alternativeName>
    <alternativeName>
        <fullName evidence="1">Nucleoside-triphosphate diphosphatase</fullName>
    </alternativeName>
    <alternativeName>
        <fullName evidence="1">Nucleoside-triphosphate pyrophosphatase</fullName>
        <shortName evidence="1">NTPase</shortName>
    </alternativeName>
</protein>
<comment type="function">
    <text evidence="1">Pyrophosphatase that catalyzes the hydrolysis of nucleoside triphosphates to their monophosphate derivatives, with a high preference for the non-canonical purine nucleotides XTP (xanthosine triphosphate), dITP (deoxyinosine triphosphate) and ITP. Seems to function as a house-cleaning enzyme that removes non-canonical purine nucleotides from the nucleotide pool, thus preventing their incorporation into DNA/RNA and avoiding chromosomal lesions.</text>
</comment>
<comment type="catalytic activity">
    <reaction evidence="1">
        <text>XTP + H2O = XMP + diphosphate + H(+)</text>
        <dbReference type="Rhea" id="RHEA:28610"/>
        <dbReference type="ChEBI" id="CHEBI:15377"/>
        <dbReference type="ChEBI" id="CHEBI:15378"/>
        <dbReference type="ChEBI" id="CHEBI:33019"/>
        <dbReference type="ChEBI" id="CHEBI:57464"/>
        <dbReference type="ChEBI" id="CHEBI:61314"/>
        <dbReference type="EC" id="3.6.1.66"/>
    </reaction>
</comment>
<comment type="catalytic activity">
    <reaction evidence="1">
        <text>dITP + H2O = dIMP + diphosphate + H(+)</text>
        <dbReference type="Rhea" id="RHEA:28342"/>
        <dbReference type="ChEBI" id="CHEBI:15377"/>
        <dbReference type="ChEBI" id="CHEBI:15378"/>
        <dbReference type="ChEBI" id="CHEBI:33019"/>
        <dbReference type="ChEBI" id="CHEBI:61194"/>
        <dbReference type="ChEBI" id="CHEBI:61382"/>
        <dbReference type="EC" id="3.6.1.66"/>
    </reaction>
</comment>
<comment type="catalytic activity">
    <reaction evidence="1">
        <text>ITP + H2O = IMP + diphosphate + H(+)</text>
        <dbReference type="Rhea" id="RHEA:29399"/>
        <dbReference type="ChEBI" id="CHEBI:15377"/>
        <dbReference type="ChEBI" id="CHEBI:15378"/>
        <dbReference type="ChEBI" id="CHEBI:33019"/>
        <dbReference type="ChEBI" id="CHEBI:58053"/>
        <dbReference type="ChEBI" id="CHEBI:61402"/>
        <dbReference type="EC" id="3.6.1.66"/>
    </reaction>
</comment>
<comment type="cofactor">
    <cofactor evidence="1">
        <name>Mg(2+)</name>
        <dbReference type="ChEBI" id="CHEBI:18420"/>
    </cofactor>
    <text evidence="1">Binds 1 Mg(2+) ion per subunit.</text>
</comment>
<comment type="subunit">
    <text evidence="1">Homodimer.</text>
</comment>
<comment type="similarity">
    <text evidence="1">Belongs to the HAM1 NTPase family.</text>
</comment>
<accession>Q7V316</accession>
<reference key="1">
    <citation type="journal article" date="2003" name="Nature">
        <title>Genome divergence in two Prochlorococcus ecotypes reflects oceanic niche differentiation.</title>
        <authorList>
            <person name="Rocap G."/>
            <person name="Larimer F.W."/>
            <person name="Lamerdin J.E."/>
            <person name="Malfatti S."/>
            <person name="Chain P."/>
            <person name="Ahlgren N.A."/>
            <person name="Arellano A."/>
            <person name="Coleman M."/>
            <person name="Hauser L."/>
            <person name="Hess W.R."/>
            <person name="Johnson Z.I."/>
            <person name="Land M.L."/>
            <person name="Lindell D."/>
            <person name="Post A.F."/>
            <person name="Regala W."/>
            <person name="Shah M."/>
            <person name="Shaw S.L."/>
            <person name="Steglich C."/>
            <person name="Sullivan M.B."/>
            <person name="Ting C.S."/>
            <person name="Tolonen A."/>
            <person name="Webb E.A."/>
            <person name="Zinser E.R."/>
            <person name="Chisholm S.W."/>
        </authorList>
    </citation>
    <scope>NUCLEOTIDE SEQUENCE [LARGE SCALE GENOMIC DNA]</scope>
    <source>
        <strain>CCMP1986 / NIES-2087 / MED4</strain>
    </source>
</reference>
<name>IXTPA_PROMP</name>
<organism>
    <name type="scientific">Prochlorococcus marinus subsp. pastoris (strain CCMP1986 / NIES-2087 / MED4)</name>
    <dbReference type="NCBI Taxonomy" id="59919"/>
    <lineage>
        <taxon>Bacteria</taxon>
        <taxon>Bacillati</taxon>
        <taxon>Cyanobacteriota</taxon>
        <taxon>Cyanophyceae</taxon>
        <taxon>Synechococcales</taxon>
        <taxon>Prochlorococcaceae</taxon>
        <taxon>Prochlorococcus</taxon>
    </lineage>
</organism>
<sequence>MKKLYLASKNQGKIEEYKKLLLNVNCQLLLQPESIEVEENGITFRENAIKKASEVSKKTRNYAIADDSGICIDALDGRPGIYSSRYAENDQKRIERVLHELDGEKNRGAFFIANVCVCSPSRDVILESEAKCFGNIILSPRGKGGFGYDPIFEERSTRLTFAEMNNVIKDSCSHRGRALKKIIPGLLEIFS</sequence>
<keyword id="KW-0378">Hydrolase</keyword>
<keyword id="KW-0460">Magnesium</keyword>
<keyword id="KW-0479">Metal-binding</keyword>
<keyword id="KW-0546">Nucleotide metabolism</keyword>
<keyword id="KW-0547">Nucleotide-binding</keyword>
<dbReference type="EC" id="3.6.1.66" evidence="1"/>
<dbReference type="EMBL" id="BX548174">
    <property type="protein sequence ID" value="CAE18738.1"/>
    <property type="molecule type" value="Genomic_DNA"/>
</dbReference>
<dbReference type="SMR" id="Q7V316"/>
<dbReference type="STRING" id="59919.PMM0279"/>
<dbReference type="KEGG" id="pmm:PMM0279"/>
<dbReference type="eggNOG" id="COG0127">
    <property type="taxonomic scope" value="Bacteria"/>
</dbReference>
<dbReference type="HOGENOM" id="CLU_082080_0_2_3"/>
<dbReference type="OrthoDB" id="9807456at2"/>
<dbReference type="Proteomes" id="UP000001026">
    <property type="component" value="Chromosome"/>
</dbReference>
<dbReference type="GO" id="GO:0005829">
    <property type="term" value="C:cytosol"/>
    <property type="evidence" value="ECO:0007669"/>
    <property type="project" value="TreeGrafter"/>
</dbReference>
<dbReference type="GO" id="GO:0035870">
    <property type="term" value="F:dITP diphosphatase activity"/>
    <property type="evidence" value="ECO:0007669"/>
    <property type="project" value="RHEA"/>
</dbReference>
<dbReference type="GO" id="GO:0036220">
    <property type="term" value="F:ITP diphosphatase activity"/>
    <property type="evidence" value="ECO:0007669"/>
    <property type="project" value="UniProtKB-EC"/>
</dbReference>
<dbReference type="GO" id="GO:0046872">
    <property type="term" value="F:metal ion binding"/>
    <property type="evidence" value="ECO:0007669"/>
    <property type="project" value="UniProtKB-KW"/>
</dbReference>
<dbReference type="GO" id="GO:0000166">
    <property type="term" value="F:nucleotide binding"/>
    <property type="evidence" value="ECO:0007669"/>
    <property type="project" value="UniProtKB-KW"/>
</dbReference>
<dbReference type="GO" id="GO:0017111">
    <property type="term" value="F:ribonucleoside triphosphate phosphatase activity"/>
    <property type="evidence" value="ECO:0007669"/>
    <property type="project" value="InterPro"/>
</dbReference>
<dbReference type="GO" id="GO:0036222">
    <property type="term" value="F:XTP diphosphatase activity"/>
    <property type="evidence" value="ECO:0007669"/>
    <property type="project" value="RHEA"/>
</dbReference>
<dbReference type="GO" id="GO:0009117">
    <property type="term" value="P:nucleotide metabolic process"/>
    <property type="evidence" value="ECO:0007669"/>
    <property type="project" value="UniProtKB-KW"/>
</dbReference>
<dbReference type="GO" id="GO:0009146">
    <property type="term" value="P:purine nucleoside triphosphate catabolic process"/>
    <property type="evidence" value="ECO:0007669"/>
    <property type="project" value="UniProtKB-UniRule"/>
</dbReference>
<dbReference type="CDD" id="cd00515">
    <property type="entry name" value="HAM1"/>
    <property type="match status" value="1"/>
</dbReference>
<dbReference type="FunFam" id="3.90.950.10:FF:000001">
    <property type="entry name" value="dITP/XTP pyrophosphatase"/>
    <property type="match status" value="1"/>
</dbReference>
<dbReference type="Gene3D" id="3.90.950.10">
    <property type="match status" value="1"/>
</dbReference>
<dbReference type="HAMAP" id="MF_01405">
    <property type="entry name" value="Non_canon_purine_NTPase"/>
    <property type="match status" value="1"/>
</dbReference>
<dbReference type="InterPro" id="IPR020922">
    <property type="entry name" value="dITP/XTP_pyrophosphatase"/>
</dbReference>
<dbReference type="InterPro" id="IPR029001">
    <property type="entry name" value="ITPase-like_fam"/>
</dbReference>
<dbReference type="InterPro" id="IPR002637">
    <property type="entry name" value="RdgB/HAM1"/>
</dbReference>
<dbReference type="NCBIfam" id="TIGR00042">
    <property type="entry name" value="RdgB/HAM1 family non-canonical purine NTP pyrophosphatase"/>
    <property type="match status" value="1"/>
</dbReference>
<dbReference type="PANTHER" id="PTHR11067:SF9">
    <property type="entry name" value="INOSINE TRIPHOSPHATE PYROPHOSPHATASE"/>
    <property type="match status" value="1"/>
</dbReference>
<dbReference type="PANTHER" id="PTHR11067">
    <property type="entry name" value="INOSINE TRIPHOSPHATE PYROPHOSPHATASE/HAM1 PROTEIN"/>
    <property type="match status" value="1"/>
</dbReference>
<dbReference type="Pfam" id="PF01725">
    <property type="entry name" value="Ham1p_like"/>
    <property type="match status" value="1"/>
</dbReference>
<dbReference type="SUPFAM" id="SSF52972">
    <property type="entry name" value="ITPase-like"/>
    <property type="match status" value="1"/>
</dbReference>
<proteinExistence type="inferred from homology"/>
<gene>
    <name type="ordered locus">PMM0279</name>
</gene>